<feature type="chain" id="PRO_0000358545" description="NAD(P)H-quinone oxidoreductase subunit K, chloroplastic">
    <location>
        <begin position="1"/>
        <end position="225"/>
    </location>
</feature>
<feature type="binding site" evidence="1">
    <location>
        <position position="43"/>
    </location>
    <ligand>
        <name>[4Fe-4S] cluster</name>
        <dbReference type="ChEBI" id="CHEBI:49883"/>
    </ligand>
</feature>
<feature type="binding site" evidence="1">
    <location>
        <position position="44"/>
    </location>
    <ligand>
        <name>[4Fe-4S] cluster</name>
        <dbReference type="ChEBI" id="CHEBI:49883"/>
    </ligand>
</feature>
<feature type="binding site" evidence="1">
    <location>
        <position position="108"/>
    </location>
    <ligand>
        <name>[4Fe-4S] cluster</name>
        <dbReference type="ChEBI" id="CHEBI:49883"/>
    </ligand>
</feature>
<feature type="binding site" evidence="1">
    <location>
        <position position="139"/>
    </location>
    <ligand>
        <name>[4Fe-4S] cluster</name>
        <dbReference type="ChEBI" id="CHEBI:49883"/>
    </ligand>
</feature>
<evidence type="ECO:0000255" key="1">
    <source>
        <dbReference type="HAMAP-Rule" id="MF_01356"/>
    </source>
</evidence>
<sequence>MNSIEFPLLDRTTQNSVISTTLNDLSNWSRLSSLWPLLYGTSCCFIEFASLIGSRFDFDRYGLVPRSSPRQADLILTAGTVTMKMAPSLVRLYEQMPEPKYVIAMGACTITGGMFSTDSYSTVRGVDKLIPVDVYLPGCPPKPEAVIDAITKLRKKISREIYEDRIRSQQGDRCFTTNHKFCLVRSTRTGNYNQGLLYQPPSTSEIPPETFFNYKGSLSSHELVN</sequence>
<organism>
    <name type="scientific">Gossypium barbadense</name>
    <name type="common">Sea Island cotton</name>
    <name type="synonym">Hibiscus barbadensis</name>
    <dbReference type="NCBI Taxonomy" id="3634"/>
    <lineage>
        <taxon>Eukaryota</taxon>
        <taxon>Viridiplantae</taxon>
        <taxon>Streptophyta</taxon>
        <taxon>Embryophyta</taxon>
        <taxon>Tracheophyta</taxon>
        <taxon>Spermatophyta</taxon>
        <taxon>Magnoliopsida</taxon>
        <taxon>eudicotyledons</taxon>
        <taxon>Gunneridae</taxon>
        <taxon>Pentapetalae</taxon>
        <taxon>rosids</taxon>
        <taxon>malvids</taxon>
        <taxon>Malvales</taxon>
        <taxon>Malvaceae</taxon>
        <taxon>Malvoideae</taxon>
        <taxon>Gossypium</taxon>
    </lineage>
</organism>
<gene>
    <name evidence="1" type="primary">ndhK</name>
</gene>
<protein>
    <recommendedName>
        <fullName evidence="1">NAD(P)H-quinone oxidoreductase subunit K, chloroplastic</fullName>
        <ecNumber evidence="1">7.1.1.-</ecNumber>
    </recommendedName>
    <alternativeName>
        <fullName evidence="1">NAD(P)H dehydrogenase subunit K</fullName>
    </alternativeName>
    <alternativeName>
        <fullName evidence="1">NADH-plastoquinone oxidoreductase subunit K</fullName>
    </alternativeName>
</protein>
<keyword id="KW-0004">4Fe-4S</keyword>
<keyword id="KW-0150">Chloroplast</keyword>
<keyword id="KW-0408">Iron</keyword>
<keyword id="KW-0411">Iron-sulfur</keyword>
<keyword id="KW-0472">Membrane</keyword>
<keyword id="KW-0479">Metal-binding</keyword>
<keyword id="KW-0520">NAD</keyword>
<keyword id="KW-0521">NADP</keyword>
<keyword id="KW-0934">Plastid</keyword>
<keyword id="KW-0618">Plastoquinone</keyword>
<keyword id="KW-0874">Quinone</keyword>
<keyword id="KW-0793">Thylakoid</keyword>
<keyword id="KW-1278">Translocase</keyword>
<keyword id="KW-0813">Transport</keyword>
<geneLocation type="chloroplast"/>
<dbReference type="EC" id="7.1.1.-" evidence="1"/>
<dbReference type="EMBL" id="AP009123">
    <property type="protein sequence ID" value="BAF41251.1"/>
    <property type="molecule type" value="Genomic_DNA"/>
</dbReference>
<dbReference type="RefSeq" id="YP_913191.1">
    <property type="nucleotide sequence ID" value="NC_008641.1"/>
</dbReference>
<dbReference type="SMR" id="A0ZZ39"/>
<dbReference type="GeneID" id="4575204"/>
<dbReference type="GO" id="GO:0009535">
    <property type="term" value="C:chloroplast thylakoid membrane"/>
    <property type="evidence" value="ECO:0007669"/>
    <property type="project" value="UniProtKB-SubCell"/>
</dbReference>
<dbReference type="GO" id="GO:0045271">
    <property type="term" value="C:respiratory chain complex I"/>
    <property type="evidence" value="ECO:0007669"/>
    <property type="project" value="TreeGrafter"/>
</dbReference>
<dbReference type="GO" id="GO:0051539">
    <property type="term" value="F:4 iron, 4 sulfur cluster binding"/>
    <property type="evidence" value="ECO:0007669"/>
    <property type="project" value="UniProtKB-KW"/>
</dbReference>
<dbReference type="GO" id="GO:0005506">
    <property type="term" value="F:iron ion binding"/>
    <property type="evidence" value="ECO:0007669"/>
    <property type="project" value="UniProtKB-UniRule"/>
</dbReference>
<dbReference type="GO" id="GO:0008137">
    <property type="term" value="F:NADH dehydrogenase (ubiquinone) activity"/>
    <property type="evidence" value="ECO:0007669"/>
    <property type="project" value="InterPro"/>
</dbReference>
<dbReference type="GO" id="GO:0048038">
    <property type="term" value="F:quinone binding"/>
    <property type="evidence" value="ECO:0007669"/>
    <property type="project" value="UniProtKB-KW"/>
</dbReference>
<dbReference type="GO" id="GO:0009060">
    <property type="term" value="P:aerobic respiration"/>
    <property type="evidence" value="ECO:0007669"/>
    <property type="project" value="TreeGrafter"/>
</dbReference>
<dbReference type="GO" id="GO:0015990">
    <property type="term" value="P:electron transport coupled proton transport"/>
    <property type="evidence" value="ECO:0007669"/>
    <property type="project" value="TreeGrafter"/>
</dbReference>
<dbReference type="GO" id="GO:0019684">
    <property type="term" value="P:photosynthesis, light reaction"/>
    <property type="evidence" value="ECO:0007669"/>
    <property type="project" value="UniProtKB-UniRule"/>
</dbReference>
<dbReference type="FunFam" id="3.40.50.12280:FF:000003">
    <property type="entry name" value="NAD(P)H-quinone oxidoreductase subunit K, chloroplastic"/>
    <property type="match status" value="1"/>
</dbReference>
<dbReference type="Gene3D" id="3.40.50.12280">
    <property type="match status" value="1"/>
</dbReference>
<dbReference type="HAMAP" id="MF_01356">
    <property type="entry name" value="NDH1_NuoB"/>
    <property type="match status" value="1"/>
</dbReference>
<dbReference type="InterPro" id="IPR006137">
    <property type="entry name" value="NADH_UbQ_OxRdtase-like_20kDa"/>
</dbReference>
<dbReference type="InterPro" id="IPR006138">
    <property type="entry name" value="NADH_UQ_OxRdtase_20Kd_su"/>
</dbReference>
<dbReference type="NCBIfam" id="TIGR01957">
    <property type="entry name" value="nuoB_fam"/>
    <property type="match status" value="1"/>
</dbReference>
<dbReference type="NCBIfam" id="NF005012">
    <property type="entry name" value="PRK06411.1"/>
    <property type="match status" value="1"/>
</dbReference>
<dbReference type="PANTHER" id="PTHR11995">
    <property type="entry name" value="NADH DEHYDROGENASE"/>
    <property type="match status" value="1"/>
</dbReference>
<dbReference type="PANTHER" id="PTHR11995:SF14">
    <property type="entry name" value="NADH DEHYDROGENASE [UBIQUINONE] IRON-SULFUR PROTEIN 7, MITOCHONDRIAL"/>
    <property type="match status" value="1"/>
</dbReference>
<dbReference type="Pfam" id="PF01058">
    <property type="entry name" value="Oxidored_q6"/>
    <property type="match status" value="1"/>
</dbReference>
<dbReference type="SUPFAM" id="SSF56770">
    <property type="entry name" value="HydA/Nqo6-like"/>
    <property type="match status" value="1"/>
</dbReference>
<dbReference type="PROSITE" id="PS01150">
    <property type="entry name" value="COMPLEX1_20K"/>
    <property type="match status" value="1"/>
</dbReference>
<comment type="function">
    <text evidence="1">NDH shuttles electrons from NAD(P)H:plastoquinone, via FMN and iron-sulfur (Fe-S) centers, to quinones in the photosynthetic chain and possibly in a chloroplast respiratory chain. The immediate electron acceptor for the enzyme in this species is believed to be plastoquinone. Couples the redox reaction to proton translocation, and thus conserves the redox energy in a proton gradient.</text>
</comment>
<comment type="catalytic activity">
    <reaction evidence="1">
        <text>a plastoquinone + NADH + (n+1) H(+)(in) = a plastoquinol + NAD(+) + n H(+)(out)</text>
        <dbReference type="Rhea" id="RHEA:42608"/>
        <dbReference type="Rhea" id="RHEA-COMP:9561"/>
        <dbReference type="Rhea" id="RHEA-COMP:9562"/>
        <dbReference type="ChEBI" id="CHEBI:15378"/>
        <dbReference type="ChEBI" id="CHEBI:17757"/>
        <dbReference type="ChEBI" id="CHEBI:57540"/>
        <dbReference type="ChEBI" id="CHEBI:57945"/>
        <dbReference type="ChEBI" id="CHEBI:62192"/>
    </reaction>
</comment>
<comment type="catalytic activity">
    <reaction evidence="1">
        <text>a plastoquinone + NADPH + (n+1) H(+)(in) = a plastoquinol + NADP(+) + n H(+)(out)</text>
        <dbReference type="Rhea" id="RHEA:42612"/>
        <dbReference type="Rhea" id="RHEA-COMP:9561"/>
        <dbReference type="Rhea" id="RHEA-COMP:9562"/>
        <dbReference type="ChEBI" id="CHEBI:15378"/>
        <dbReference type="ChEBI" id="CHEBI:17757"/>
        <dbReference type="ChEBI" id="CHEBI:57783"/>
        <dbReference type="ChEBI" id="CHEBI:58349"/>
        <dbReference type="ChEBI" id="CHEBI:62192"/>
    </reaction>
</comment>
<comment type="cofactor">
    <cofactor evidence="1">
        <name>[4Fe-4S] cluster</name>
        <dbReference type="ChEBI" id="CHEBI:49883"/>
    </cofactor>
    <text evidence="1">Binds 1 [4Fe-4S] cluster.</text>
</comment>
<comment type="subunit">
    <text evidence="1">NDH is composed of at least 16 different subunits, 5 of which are encoded in the nucleus.</text>
</comment>
<comment type="subcellular location">
    <subcellularLocation>
        <location evidence="1">Plastid</location>
        <location evidence="1">Chloroplast thylakoid membrane</location>
        <topology evidence="1">Peripheral membrane protein</topology>
        <orientation evidence="1">Stromal side</orientation>
    </subcellularLocation>
</comment>
<comment type="similarity">
    <text evidence="1">Belongs to the complex I 20 kDa subunit family.</text>
</comment>
<name>NDHK_GOSBA</name>
<accession>A0ZZ39</accession>
<proteinExistence type="inferred from homology"/>
<reference key="1">
    <citation type="journal article" date="2006" name="Genes Genet. Syst.">
        <title>Complete nucleotide sequence of the cotton (Gossypium barbadense L.) chloroplast genome with a comparative analysis of sequences among 9 dicot plants.</title>
        <authorList>
            <person name="Ibrahim R.I.H."/>
            <person name="Azuma J."/>
            <person name="Sakamoto M."/>
        </authorList>
    </citation>
    <scope>NUCLEOTIDE SEQUENCE [LARGE SCALE GENOMIC DNA]</scope>
</reference>